<gene>
    <name evidence="27" type="primary">SCN3A</name>
    <name evidence="26" type="synonym">KIAA1356</name>
    <name type="synonym">NAC3</name>
</gene>
<organism>
    <name type="scientific">Homo sapiens</name>
    <name type="common">Human</name>
    <dbReference type="NCBI Taxonomy" id="9606"/>
    <lineage>
        <taxon>Eukaryota</taxon>
        <taxon>Metazoa</taxon>
        <taxon>Chordata</taxon>
        <taxon>Craniata</taxon>
        <taxon>Vertebrata</taxon>
        <taxon>Euteleostomi</taxon>
        <taxon>Mammalia</taxon>
        <taxon>Eutheria</taxon>
        <taxon>Euarchontoglires</taxon>
        <taxon>Primates</taxon>
        <taxon>Haplorrhini</taxon>
        <taxon>Catarrhini</taxon>
        <taxon>Hominidae</taxon>
        <taxon>Homo</taxon>
    </lineage>
</organism>
<comment type="function">
    <text evidence="1 11 14 16 17">Pore-forming subunit of Nav1.3, a voltage-gated sodium (Nav) channel that directly mediates the depolarizing phase of action potentials in excitable membranes. Navs, also called VGSCs (voltage-gated sodium channels) or VDSCs (voltage-dependent sodium channels), operate by switching between closed and open conformations depending on the voltage difference across the membrane. In the open conformation they allow Na(+) ions to selectively pass through the pore, along their electrochemical gradient. The influx of Na+ ions provokes membrane depolarization, initiating the propagation of electrical signals throughout cells and tissues (PubMed:24157691, PubMed:28235671, PubMed:29466837, PubMed:35277491). In some secretory cell types, it also participates in cell excitability through membrane depolarization and regulates cells responsiveness to stimuli triggering secretion. For instance, it controls the release of serotonin/5-hydroxytryptamine by enterochromaffin cells and is required for both glucagon- and glucose-induced insulin secretion in pancreatic endocrine cells (By similarity).</text>
</comment>
<comment type="catalytic activity">
    <reaction evidence="23 24 25">
        <text>Na(+)(in) = Na(+)(out)</text>
        <dbReference type="Rhea" id="RHEA:34963"/>
        <dbReference type="ChEBI" id="CHEBI:29101"/>
    </reaction>
</comment>
<comment type="subunit">
    <text evidence="10 12 17">Heterooligomer of an alpha subunit, SCN3A, and 1 to 3 regulatory beta subunits including SCN1B and SCN2B; disulfide-linked with some beta subunits like SCN2B (PubMed:35277491). Interacts with NEDD4L; could regulate expression of SCN3A at the plasma membrane through ubiquitination-regulated endocytosis (PubMed:15548568). Interacts with the conotoxin GVIIJ (PubMed:15548568, PubMed:24497506).</text>
</comment>
<comment type="subcellular location">
    <subcellularLocation>
        <location evidence="14 17">Cell membrane</location>
        <topology evidence="17">Multi-pass membrane protein</topology>
    </subcellularLocation>
    <subcellularLocation>
        <location evidence="1">Basal cell membrane</location>
        <topology evidence="17">Multi-pass membrane protein</topology>
    </subcellularLocation>
    <text evidence="1">In enterochromaffin cells, localized highly asymmetrically, almost exclusively at the basal side.</text>
</comment>
<comment type="alternative products">
    <event type="alternative splicing"/>
    <isoform>
        <id>Q9NY46-1</id>
        <name>1</name>
        <name>6A-12+12b</name>
        <sequence type="displayed"/>
    </isoform>
    <isoform>
        <id>Q9NY46-2</id>
        <name>2</name>
        <name>6A-12</name>
        <sequence type="described" ref="VSP_001034"/>
    </isoform>
    <isoform>
        <id>Q9NY46-3</id>
        <name>3</name>
        <name>6N-12+12b</name>
        <sequence type="described" ref="VSP_001033"/>
    </isoform>
    <isoform>
        <id>Q9NY46-4</id>
        <name>4</name>
        <name>6N-12</name>
        <sequence type="described" ref="VSP_001033 VSP_001034"/>
    </isoform>
    <text>Exons 6A and 6N only differ by a single residue.</text>
</comment>
<comment type="tissue specificity">
    <text evidence="15">Expressed in enterochromaffin cells in both colon and small bowel (at protein level).</text>
</comment>
<comment type="domain">
    <text evidence="22">The sequence contains 4 internal repeats, each with 5 hydrophobic segments (S1, S2, S3, S5, S6) and one positively charged segment (S4). Segments S4 are probably the voltage-sensors and are characterized by a series of positively charged amino acids at every third position.</text>
</comment>
<comment type="PTM">
    <text evidence="10">May be ubiquitinated by NEDD4L; which would promote its endocytosis.</text>
</comment>
<comment type="PTM">
    <text evidence="4">Phosphorylation at Ser-1501 by PKC in a highly conserved cytoplasmic loop slows inactivation of the sodium channel and reduces peak sodium currents.</text>
</comment>
<comment type="disease" evidence="11 14">
    <disease id="DI-05229">
        <name>Epilepsy, familial focal, with variable foci 4</name>
        <acronym>FFEVF4</acronym>
        <description>An autosomal dominant form of epilepsy characterized by focal seizures arising from different cortical regions, including the temporal, frontal, parietal, and occipital lobes. Seizure types commonly include temporal lobe epilepsy, frontal lobe epilepsy, and nocturnal frontal lobe epilepsy. Some patients may have intellectual disability or autism spectrum disorders. Seizure onset usually occurs in the first or second decades, although later onset has been reported, and there is phenotypic variability within families. A subset of patients have structural brain abnormalities. Penetrance of the disorder is incomplete. FFEVF4 is characterized by onset of focal seizures in the first years of life.</description>
        <dbReference type="MIM" id="617935"/>
    </disease>
    <text>The disease is caused by variants affecting the gene represented in this entry.</text>
</comment>
<comment type="disease" evidence="16">
    <disease id="DI-05228">
        <name>Developmental and epileptic encephalopathy 62</name>
        <acronym>DEE62</acronym>
        <description>A form of epileptic encephalopathy, a heterogeneous group of severe early-onset epilepsies characterized by refractory seizures, neurodevelopmental impairment, and poor prognosis. Development is normal prior to seizure onset, after which cognitive and motor delays become apparent. DEE62 is characterized by onset of seizures in the first year of life.</description>
        <dbReference type="MIM" id="617938"/>
    </disease>
    <text>The disease is caused by variants affecting the gene represented in this entry.</text>
</comment>
<comment type="similarity">
    <text evidence="22">Belongs to the sodium channel (TC 1.A.1.10) family. Nav1.3/SCN3A subfamily.</text>
</comment>
<sequence length="2000" mass="226294">MAQALLVPPGPESFRLFTRESLAAIEKRAAEEKAKKPKKEQDNDDENKPKPNSDLEAGKNLPFIYGDIPPEMVSEPLEDLDPYYINKKTFIVMNKGKAIFRFSATSALYILTPLNPVRKIAIKILVHSLFSMLIMCTILTNCVFMTLSNPPDWTKNVEYTFTGIYTFESLIKILARGFCLEDFTFLRDPWNWLDFSVIVMAYVTEFVSLGNVSALRTFRVLRALKTISVIPGLKTIVGALIQSVKKLSDVMILTVFCLSVFALIGLQLFMGNLRNKCLQWPPSDSAFETNTTSYFNGTMDSNGTFVNVTMSTFNWKDYIGDDSHFYVLDGQKDPLLCGNGSDAGQCPEGYICVKAGRNPNYGYTSFDTFSWAFLSLFRLMTQDYWENLYQLTLRAAGKTYMIFFVLVIFLGSFYLVNLILAVVAMAYEEQNQATLEEAEQKEAEFQQMLEQLKKQQEEAQAVAAASAASRDFSGIGGLGELLESSSEASKLSSKSAKEWRNRRKKRRQREHLEGNNKGERDSFPKSESEDSVKRSSFLFSMDGNRLTSDKKFCSPHQSLLSIRGSLFSPRRNSKTSIFSFRGRAKDVGSENDFADDEHSTFEDSESRRDSLFVPHRHGERRNSNVSQASMSSRMVPGLPANGKMHSTVDCNGVVSLVGGPSALTSPTGQLPPEGTTTETEVRKRRLSSYQISMEMLEDSSGRQRAVSIASILTNTMEELEESRQKCPPCWYRFANVFLIWDCCDAWLKVKHLVNLIVMDPFVDLAITICIVLNTLFMAMEHYPMTEQFSSVLTVGNLVFTGIFTAEMVLKIIAMDPYYYFQEGWNIFDGIIVSLSLMELGLSNVEGLSVLRSFRLLRVFKLAKSWPTLNMLIKIIGNSVGALGNLTLVLAIIVFIFAVVGMQLFGKSYKECVCKINDDCTLPRWHMNDFFHSFLIVFRVLCGEWIETMWDCMEVAGQTMCLIVFMLVMVIGNLVVLNLFLALLLSSFSSDNLAATDDDNEMNNLQIAVGRMQKGIDYVKNKMRECFQKAFFRKPKVIEIHEGNKIDSCMSNNTGIEISKELNYLRDGNGTTSGVGTGSSVEKYVIDENDYMSFINNPSLTVTVPIAVGESDFENLNTEEFSSESELEESKEKLNATSSSEGSTVDVVLPREGEQAETEPEEDLKPEACFTEGCIKKFPFCQVSTEEGKGKIWWNLRKTCYSIVEHNWFETFIVFMILLSSGALAFEDIYIEQRKTIKTMLEYADKVFTYIFILEMLLKWVAYGFQTYFTNAWCWLDFLIVDVSLVSLVANALGYSELGAIKSLRTLRALRPLRALSRFEGMRVVVNALVGAIPSIMNVLLVCLIFWLIFSIMGVNLFAGKFYHCVNMTTGNMFDISDVNNLSDCQALGKQARWKNVKVNFDNVGAGYLALLQVATFKGWMDIMYAAVDSRDVKLQPVYEENLYMYLYFVIFIIFGSFFTLNLFIGVIIDNFNQQKKKFGGQDIFMTEEQKKYYNAMKKLGSKKPQKPIPRPANKFQGMVFDFVTRQVFDISIMILICLNMVTMMVETDDQGKYMTLVLSRINLVFIVLFTGEFVLKLVSLRHYYFTIGWNIFDFVVVILSIVGMFLAEMIEKYFVSPTLFRVIRLARIGRILRLIKGAKGIRTLLFALMMSLPALFNIGLLLFLVMFIYAIFGMSNFAYVKKEAGIDDMFNFETFGNSMICLFQITTSAGWDGLLAPILNSAPPDCDPDTIHPGSSVKGDCGNPSVGIFFFVSYIIISFLVVVNMYIAVILENFSVATEESAEPLSEDDFEMFYEVWEKFDPDATQFIEFSKLSDFAAALDPPLLIAKPNKVQLIAMDLPMVSGDRIHCLDILFAFTKRVLGESGEMDALRIQMEDRFMASNPSKVSYEPITTTLKRKQEEVSAAIIQRNFRCYLLKQRLKNISSNYNKEAIKGRIDLPIKQDMIIDKLNGNSTPEKTDGSSSTTSPPSYDSVTKPDKEKFEKDKPEKESKGKEVRENQK</sequence>
<dbReference type="EMBL" id="AJ251507">
    <property type="protein sequence ID" value="CAB85895.1"/>
    <property type="molecule type" value="mRNA"/>
</dbReference>
<dbReference type="EMBL" id="AF225987">
    <property type="protein sequence ID" value="AAK00219.1"/>
    <property type="molecule type" value="mRNA"/>
</dbReference>
<dbReference type="EMBL" id="AF330135">
    <property type="protein sequence ID" value="AAG53414.1"/>
    <property type="molecule type" value="Genomic_DNA"/>
</dbReference>
<dbReference type="EMBL" id="AF330118">
    <property type="protein sequence ID" value="AAG53414.1"/>
    <property type="status" value="JOINED"/>
    <property type="molecule type" value="Genomic_DNA"/>
</dbReference>
<dbReference type="EMBL" id="AF330119">
    <property type="protein sequence ID" value="AAG53414.1"/>
    <property type="status" value="JOINED"/>
    <property type="molecule type" value="Genomic_DNA"/>
</dbReference>
<dbReference type="EMBL" id="AF330120">
    <property type="protein sequence ID" value="AAG53414.1"/>
    <property type="status" value="JOINED"/>
    <property type="molecule type" value="Genomic_DNA"/>
</dbReference>
<dbReference type="EMBL" id="AF330121">
    <property type="protein sequence ID" value="AAG53414.1"/>
    <property type="status" value="JOINED"/>
    <property type="molecule type" value="Genomic_DNA"/>
</dbReference>
<dbReference type="EMBL" id="AF330122">
    <property type="protein sequence ID" value="AAG53414.1"/>
    <property type="status" value="JOINED"/>
    <property type="molecule type" value="Genomic_DNA"/>
</dbReference>
<dbReference type="EMBL" id="AF330123">
    <property type="protein sequence ID" value="AAG53414.1"/>
    <property type="status" value="JOINED"/>
    <property type="molecule type" value="Genomic_DNA"/>
</dbReference>
<dbReference type="EMBL" id="AF330124">
    <property type="protein sequence ID" value="AAG53414.1"/>
    <property type="status" value="JOINED"/>
    <property type="molecule type" value="Genomic_DNA"/>
</dbReference>
<dbReference type="EMBL" id="AF330125">
    <property type="protein sequence ID" value="AAG53414.1"/>
    <property type="status" value="JOINED"/>
    <property type="molecule type" value="Genomic_DNA"/>
</dbReference>
<dbReference type="EMBL" id="AF330126">
    <property type="protein sequence ID" value="AAG53414.1"/>
    <property type="status" value="JOINED"/>
    <property type="molecule type" value="Genomic_DNA"/>
</dbReference>
<dbReference type="EMBL" id="AF330127">
    <property type="protein sequence ID" value="AAG53414.1"/>
    <property type="status" value="JOINED"/>
    <property type="molecule type" value="Genomic_DNA"/>
</dbReference>
<dbReference type="EMBL" id="AF330128">
    <property type="protein sequence ID" value="AAG53414.1"/>
    <property type="status" value="JOINED"/>
    <property type="molecule type" value="Genomic_DNA"/>
</dbReference>
<dbReference type="EMBL" id="AF330129">
    <property type="protein sequence ID" value="AAG53414.1"/>
    <property type="status" value="JOINED"/>
    <property type="molecule type" value="Genomic_DNA"/>
</dbReference>
<dbReference type="EMBL" id="AF330130">
    <property type="protein sequence ID" value="AAG53414.1"/>
    <property type="status" value="JOINED"/>
    <property type="molecule type" value="Genomic_DNA"/>
</dbReference>
<dbReference type="EMBL" id="AF330131">
    <property type="protein sequence ID" value="AAG53414.1"/>
    <property type="status" value="JOINED"/>
    <property type="molecule type" value="Genomic_DNA"/>
</dbReference>
<dbReference type="EMBL" id="AF330132">
    <property type="protein sequence ID" value="AAG53414.1"/>
    <property type="status" value="JOINED"/>
    <property type="molecule type" value="Genomic_DNA"/>
</dbReference>
<dbReference type="EMBL" id="AF330133">
    <property type="protein sequence ID" value="AAG53414.1"/>
    <property type="status" value="JOINED"/>
    <property type="molecule type" value="Genomic_DNA"/>
</dbReference>
<dbReference type="EMBL" id="AF330134">
    <property type="protein sequence ID" value="AAG53414.1"/>
    <property type="status" value="JOINED"/>
    <property type="molecule type" value="Genomic_DNA"/>
</dbReference>
<dbReference type="EMBL" id="AF330135">
    <property type="protein sequence ID" value="AAG53415.1"/>
    <property type="molecule type" value="Genomic_DNA"/>
</dbReference>
<dbReference type="EMBL" id="AF330118">
    <property type="protein sequence ID" value="AAG53415.1"/>
    <property type="status" value="JOINED"/>
    <property type="molecule type" value="Genomic_DNA"/>
</dbReference>
<dbReference type="EMBL" id="AF330119">
    <property type="protein sequence ID" value="AAG53415.1"/>
    <property type="status" value="JOINED"/>
    <property type="molecule type" value="Genomic_DNA"/>
</dbReference>
<dbReference type="EMBL" id="AF330120">
    <property type="protein sequence ID" value="AAG53415.1"/>
    <property type="status" value="JOINED"/>
    <property type="molecule type" value="Genomic_DNA"/>
</dbReference>
<dbReference type="EMBL" id="AF330121">
    <property type="protein sequence ID" value="AAG53415.1"/>
    <property type="status" value="JOINED"/>
    <property type="molecule type" value="Genomic_DNA"/>
</dbReference>
<dbReference type="EMBL" id="AF330122">
    <property type="protein sequence ID" value="AAG53415.1"/>
    <property type="status" value="JOINED"/>
    <property type="molecule type" value="Genomic_DNA"/>
</dbReference>
<dbReference type="EMBL" id="AF330123">
    <property type="protein sequence ID" value="AAG53415.1"/>
    <property type="status" value="JOINED"/>
    <property type="molecule type" value="Genomic_DNA"/>
</dbReference>
<dbReference type="EMBL" id="AF330124">
    <property type="protein sequence ID" value="AAG53415.1"/>
    <property type="status" value="JOINED"/>
    <property type="molecule type" value="Genomic_DNA"/>
</dbReference>
<dbReference type="EMBL" id="AF330125">
    <property type="protein sequence ID" value="AAG53415.1"/>
    <property type="status" value="JOINED"/>
    <property type="molecule type" value="Genomic_DNA"/>
</dbReference>
<dbReference type="EMBL" id="AF330126">
    <property type="protein sequence ID" value="AAG53415.1"/>
    <property type="status" value="JOINED"/>
    <property type="molecule type" value="Genomic_DNA"/>
</dbReference>
<dbReference type="EMBL" id="AF330127">
    <property type="protein sequence ID" value="AAG53415.1"/>
    <property type="status" value="JOINED"/>
    <property type="molecule type" value="Genomic_DNA"/>
</dbReference>
<dbReference type="EMBL" id="AF330128">
    <property type="protein sequence ID" value="AAG53415.1"/>
    <property type="status" value="JOINED"/>
    <property type="molecule type" value="Genomic_DNA"/>
</dbReference>
<dbReference type="EMBL" id="AF330129">
    <property type="protein sequence ID" value="AAG53415.1"/>
    <property type="status" value="JOINED"/>
    <property type="molecule type" value="Genomic_DNA"/>
</dbReference>
<dbReference type="EMBL" id="AF330130">
    <property type="protein sequence ID" value="AAG53415.1"/>
    <property type="status" value="JOINED"/>
    <property type="molecule type" value="Genomic_DNA"/>
</dbReference>
<dbReference type="EMBL" id="AF330131">
    <property type="protein sequence ID" value="AAG53415.1"/>
    <property type="status" value="JOINED"/>
    <property type="molecule type" value="Genomic_DNA"/>
</dbReference>
<dbReference type="EMBL" id="AF330132">
    <property type="protein sequence ID" value="AAG53415.1"/>
    <property type="status" value="JOINED"/>
    <property type="molecule type" value="Genomic_DNA"/>
</dbReference>
<dbReference type="EMBL" id="AF330133">
    <property type="protein sequence ID" value="AAG53415.1"/>
    <property type="status" value="JOINED"/>
    <property type="molecule type" value="Genomic_DNA"/>
</dbReference>
<dbReference type="EMBL" id="AF330134">
    <property type="protein sequence ID" value="AAG53415.1"/>
    <property type="status" value="JOINED"/>
    <property type="molecule type" value="Genomic_DNA"/>
</dbReference>
<dbReference type="EMBL" id="AC013463">
    <property type="protein sequence ID" value="AAY15072.1"/>
    <property type="molecule type" value="Genomic_DNA"/>
</dbReference>
<dbReference type="EMBL" id="AF035685">
    <property type="protein sequence ID" value="AAC29514.1"/>
    <property type="molecule type" value="mRNA"/>
</dbReference>
<dbReference type="EMBL" id="AF035686">
    <property type="protein sequence ID" value="AAC29515.1"/>
    <property type="molecule type" value="mRNA"/>
</dbReference>
<dbReference type="EMBL" id="S69887">
    <property type="protein sequence ID" value="AAB30530.1"/>
    <property type="molecule type" value="Genomic_DNA"/>
</dbReference>
<dbReference type="EMBL" id="AB037777">
    <property type="protein sequence ID" value="BAA92594.1"/>
    <property type="molecule type" value="mRNA"/>
</dbReference>
<dbReference type="EMBL" id="AF239921">
    <property type="protein sequence ID" value="AAF44690.1"/>
    <property type="molecule type" value="mRNA"/>
</dbReference>
<dbReference type="CCDS" id="CCDS33312.1">
    <molecule id="Q9NY46-3"/>
</dbReference>
<dbReference type="CCDS" id="CCDS46440.1">
    <molecule id="Q9NY46-2"/>
</dbReference>
<dbReference type="PIR" id="A54937">
    <property type="entry name" value="A54937"/>
</dbReference>
<dbReference type="RefSeq" id="NP_001075145.1">
    <molecule id="Q9NY46-4"/>
    <property type="nucleotide sequence ID" value="NM_001081676.2"/>
</dbReference>
<dbReference type="RefSeq" id="NP_001075146.1">
    <molecule id="Q9NY46-2"/>
    <property type="nucleotide sequence ID" value="NM_001081677.2"/>
</dbReference>
<dbReference type="RefSeq" id="NP_008853.3">
    <molecule id="Q9NY46-3"/>
    <property type="nucleotide sequence ID" value="NM_006922.3"/>
</dbReference>
<dbReference type="RefSeq" id="XP_011509912.1">
    <molecule id="Q9NY46-3"/>
    <property type="nucleotide sequence ID" value="XM_011511610.4"/>
</dbReference>
<dbReference type="RefSeq" id="XP_016860149.1">
    <molecule id="Q9NY46-1"/>
    <property type="nucleotide sequence ID" value="XM_017004660.3"/>
</dbReference>
<dbReference type="RefSeq" id="XP_054199278.1">
    <molecule id="Q9NY46-1"/>
    <property type="nucleotide sequence ID" value="XM_054343303.1"/>
</dbReference>
<dbReference type="RefSeq" id="XP_054199279.1">
    <molecule id="Q9NY46-3"/>
    <property type="nucleotide sequence ID" value="XM_054343304.1"/>
</dbReference>
<dbReference type="PDB" id="7W77">
    <property type="method" value="EM"/>
    <property type="resolution" value="3.30 A"/>
    <property type="chains" value="D=1-1951"/>
</dbReference>
<dbReference type="PDB" id="7W7F">
    <property type="method" value="EM"/>
    <property type="resolution" value="3.35 A"/>
    <property type="chains" value="D=1-2000"/>
</dbReference>
<dbReference type="PDBsum" id="7W77"/>
<dbReference type="PDBsum" id="7W7F"/>
<dbReference type="BMRB" id="Q9NY46"/>
<dbReference type="EMDB" id="EMD-32341"/>
<dbReference type="EMDB" id="EMD-32343"/>
<dbReference type="SMR" id="Q9NY46"/>
<dbReference type="BioGRID" id="112233">
    <property type="interactions" value="13"/>
</dbReference>
<dbReference type="ComplexPortal" id="CPX-8661">
    <property type="entry name" value="Nav1.3 voltage-gated sodium channel complex, SCN1B-SCN2B variant"/>
</dbReference>
<dbReference type="ComplexPortal" id="CPX-8662">
    <property type="entry name" value="Nav1.3 voltage-gated sodium channel complex, SCN2B-SCN3B variant"/>
</dbReference>
<dbReference type="ComplexPortal" id="CPX-8663">
    <property type="entry name" value="Nav1.3 voltage-gated sodium channel complex, SCN3B-SCN4B variant"/>
</dbReference>
<dbReference type="ComplexPortal" id="CPX-8664">
    <property type="entry name" value="Nav1.3 voltage-gated sodium channel complex, SCN1B-SCN4B variant"/>
</dbReference>
<dbReference type="CORUM" id="Q9NY46"/>
<dbReference type="FunCoup" id="Q9NY46">
    <property type="interactions" value="319"/>
</dbReference>
<dbReference type="IntAct" id="Q9NY46">
    <property type="interactions" value="8"/>
</dbReference>
<dbReference type="MINT" id="Q9NY46"/>
<dbReference type="STRING" id="9606.ENSP00000283254"/>
<dbReference type="BindingDB" id="Q9NY46"/>
<dbReference type="ChEMBL" id="CHEMBL5163"/>
<dbReference type="DrugBank" id="DB09088">
    <property type="generic name" value="Amylocaine"/>
</dbReference>
<dbReference type="DrugBank" id="DB09009">
    <property type="generic name" value="Articaine"/>
</dbReference>
<dbReference type="DrugBank" id="DB13746">
    <property type="generic name" value="Bioallethrin"/>
</dbReference>
<dbReference type="DrugBank" id="DB05541">
    <property type="generic name" value="Brivaracetam"/>
</dbReference>
<dbReference type="DrugBank" id="DB00564">
    <property type="generic name" value="Carbamazepine"/>
</dbReference>
<dbReference type="DrugBank" id="DB06119">
    <property type="generic name" value="Cenobamate"/>
</dbReference>
<dbReference type="DrugBank" id="DB01161">
    <property type="generic name" value="Chloroprocaine"/>
</dbReference>
<dbReference type="DrugBank" id="DB00907">
    <property type="generic name" value="Cocaine"/>
</dbReference>
<dbReference type="DrugBank" id="DB13269">
    <property type="generic name" value="Dichlorobenzyl alcohol"/>
</dbReference>
<dbReference type="DrugBank" id="DB13961">
    <property type="generic name" value="Fish oil"/>
</dbReference>
<dbReference type="DrugBank" id="DB06218">
    <property type="generic name" value="Lacosamide"/>
</dbReference>
<dbReference type="DrugBank" id="DB00555">
    <property type="generic name" value="Lamotrigine"/>
</dbReference>
<dbReference type="DrugBank" id="DB13766">
    <property type="generic name" value="Lidoflazine"/>
</dbReference>
<dbReference type="DrugBank" id="DB00776">
    <property type="generic name" value="Oxcarbazepine"/>
</dbReference>
<dbReference type="DrugBank" id="DB11186">
    <property type="generic name" value="Pentoxyverine"/>
</dbReference>
<dbReference type="DrugBank" id="DB00252">
    <property type="generic name" value="Phenytoin"/>
</dbReference>
<dbReference type="DrugBank" id="DB09345">
    <property type="generic name" value="Pramocaine"/>
</dbReference>
<dbReference type="DrugBank" id="DB01069">
    <property type="generic name" value="Promethazine"/>
</dbReference>
<dbReference type="DrugBank" id="DB09342">
    <property type="generic name" value="Propoxycaine"/>
</dbReference>
<dbReference type="DrugBank" id="DB00243">
    <property type="generic name" value="Ranolazine"/>
</dbReference>
<dbReference type="DrugBank" id="DB09085">
    <property type="generic name" value="Tetracaine"/>
</dbReference>
<dbReference type="DrugBank" id="DB05232">
    <property type="generic name" value="Tetrodotoxin"/>
</dbReference>
<dbReference type="DrugBank" id="DB00273">
    <property type="generic name" value="Topiramate"/>
</dbReference>
<dbReference type="DrugBank" id="DB00313">
    <property type="generic name" value="Valproic acid"/>
</dbReference>
<dbReference type="DrugBank" id="DB00909">
    <property type="generic name" value="Zonisamide"/>
</dbReference>
<dbReference type="DrugCentral" id="Q9NY46"/>
<dbReference type="GuidetoPHARMACOLOGY" id="580"/>
<dbReference type="GlyCosmos" id="Q9NY46">
    <property type="glycosylation" value="8 sites, No reported glycans"/>
</dbReference>
<dbReference type="GlyGen" id="Q9NY46">
    <property type="glycosylation" value="9 sites, 1 O-linked glycan (1 site)"/>
</dbReference>
<dbReference type="iPTMnet" id="Q9NY46"/>
<dbReference type="PhosphoSitePlus" id="Q9NY46"/>
<dbReference type="BioMuta" id="SCN3A"/>
<dbReference type="DMDM" id="25014054"/>
<dbReference type="jPOST" id="Q9NY46"/>
<dbReference type="MassIVE" id="Q9NY46"/>
<dbReference type="PaxDb" id="9606-ENSP00000283254"/>
<dbReference type="PeptideAtlas" id="Q9NY46"/>
<dbReference type="ProteomicsDB" id="83165">
    <molecule id="Q9NY46-1"/>
</dbReference>
<dbReference type="ProteomicsDB" id="83166">
    <molecule id="Q9NY46-2"/>
</dbReference>
<dbReference type="ProteomicsDB" id="83167">
    <molecule id="Q9NY46-3"/>
</dbReference>
<dbReference type="ProteomicsDB" id="83168">
    <molecule id="Q9NY46-4"/>
</dbReference>
<dbReference type="Antibodypedia" id="33767">
    <property type="antibodies" value="133 antibodies from 24 providers"/>
</dbReference>
<dbReference type="DNASU" id="6328"/>
<dbReference type="Ensembl" id="ENST00000283254.12">
    <molecule id="Q9NY46-3"/>
    <property type="protein sequence ID" value="ENSP00000283254.7"/>
    <property type="gene ID" value="ENSG00000153253.20"/>
</dbReference>
<dbReference type="Ensembl" id="ENST00000409101.7">
    <molecule id="Q9NY46-2"/>
    <property type="protein sequence ID" value="ENSP00000386726.3"/>
    <property type="gene ID" value="ENSG00000153253.20"/>
</dbReference>
<dbReference type="GeneID" id="6328"/>
<dbReference type="KEGG" id="hsa:6328"/>
<dbReference type="MANE-Select" id="ENST00000283254.12">
    <molecule id="Q9NY46-3"/>
    <property type="protein sequence ID" value="ENSP00000283254.7"/>
    <property type="RefSeq nucleotide sequence ID" value="NM_006922.4"/>
    <property type="RefSeq protein sequence ID" value="NP_008853.3"/>
</dbReference>
<dbReference type="UCSC" id="uc002ucx.4">
    <molecule id="Q9NY46-1"/>
    <property type="organism name" value="human"/>
</dbReference>
<dbReference type="AGR" id="HGNC:10590"/>
<dbReference type="CTD" id="6328"/>
<dbReference type="DisGeNET" id="6328"/>
<dbReference type="GeneCards" id="SCN3A"/>
<dbReference type="GeneReviews" id="SCN3A"/>
<dbReference type="HGNC" id="HGNC:10590">
    <property type="gene designation" value="SCN3A"/>
</dbReference>
<dbReference type="HPA" id="ENSG00000153253">
    <property type="expression patterns" value="Tissue enhanced (brain, lymphoid tissue)"/>
</dbReference>
<dbReference type="MalaCards" id="SCN3A"/>
<dbReference type="MIM" id="182391">
    <property type="type" value="gene"/>
</dbReference>
<dbReference type="MIM" id="617935">
    <property type="type" value="phenotype"/>
</dbReference>
<dbReference type="MIM" id="617938">
    <property type="type" value="phenotype"/>
</dbReference>
<dbReference type="neXtProt" id="NX_Q9NY46"/>
<dbReference type="OpenTargets" id="ENSG00000153253"/>
<dbReference type="Orphanet" id="442835">
    <property type="disease" value="Non-specific early-onset epileptic encephalopathy"/>
</dbReference>
<dbReference type="PharmGKB" id="PA35005"/>
<dbReference type="VEuPathDB" id="HostDB:ENSG00000153253"/>
<dbReference type="eggNOG" id="KOG2301">
    <property type="taxonomic scope" value="Eukaryota"/>
</dbReference>
<dbReference type="GeneTree" id="ENSGT00940000157130"/>
<dbReference type="HOGENOM" id="CLU_000540_5_0_1"/>
<dbReference type="InParanoid" id="Q9NY46"/>
<dbReference type="OMA" id="CDAWLKI"/>
<dbReference type="OrthoDB" id="2984333at2759"/>
<dbReference type="PAN-GO" id="Q9NY46">
    <property type="GO annotations" value="6 GO annotations based on evolutionary models"/>
</dbReference>
<dbReference type="PhylomeDB" id="Q9NY46"/>
<dbReference type="TreeFam" id="TF323985"/>
<dbReference type="PathwayCommons" id="Q9NY46"/>
<dbReference type="Reactome" id="R-HSA-445095">
    <property type="pathway name" value="Interaction between L1 and Ankyrins"/>
</dbReference>
<dbReference type="Reactome" id="R-HSA-5576892">
    <property type="pathway name" value="Phase 0 - rapid depolarisation"/>
</dbReference>
<dbReference type="Reactome" id="R-HSA-9717207">
    <property type="pathway name" value="Sensory perception of sweet, bitter, and umami (glutamate) taste"/>
</dbReference>
<dbReference type="SignaLink" id="Q9NY46"/>
<dbReference type="SIGNOR" id="Q9NY46"/>
<dbReference type="BioGRID-ORCS" id="6328">
    <property type="hits" value="11 hits in 1160 CRISPR screens"/>
</dbReference>
<dbReference type="ChiTaRS" id="SCN3A">
    <property type="organism name" value="human"/>
</dbReference>
<dbReference type="GeneWiki" id="SCN3A"/>
<dbReference type="GenomeRNAi" id="6328"/>
<dbReference type="Pharos" id="Q9NY46">
    <property type="development level" value="Tclin"/>
</dbReference>
<dbReference type="PRO" id="PR:Q9NY46"/>
<dbReference type="Proteomes" id="UP000005640">
    <property type="component" value="Chromosome 2"/>
</dbReference>
<dbReference type="RNAct" id="Q9NY46">
    <property type="molecule type" value="protein"/>
</dbReference>
<dbReference type="Bgee" id="ENSG00000153253">
    <property type="expression patterns" value="Expressed in endothelial cell and 151 other cell types or tissues"/>
</dbReference>
<dbReference type="ExpressionAtlas" id="Q9NY46">
    <property type="expression patterns" value="baseline and differential"/>
</dbReference>
<dbReference type="GO" id="GO:0009925">
    <property type="term" value="C:basal plasma membrane"/>
    <property type="evidence" value="ECO:0007669"/>
    <property type="project" value="UniProtKB-SubCell"/>
</dbReference>
<dbReference type="GO" id="GO:0005886">
    <property type="term" value="C:plasma membrane"/>
    <property type="evidence" value="ECO:0000314"/>
    <property type="project" value="UniProtKB"/>
</dbReference>
<dbReference type="GO" id="GO:0016528">
    <property type="term" value="C:sarcoplasm"/>
    <property type="evidence" value="ECO:0007669"/>
    <property type="project" value="Ensembl"/>
</dbReference>
<dbReference type="GO" id="GO:0001518">
    <property type="term" value="C:voltage-gated sodium channel complex"/>
    <property type="evidence" value="ECO:0000314"/>
    <property type="project" value="UniProtKB"/>
</dbReference>
<dbReference type="GO" id="GO:0005248">
    <property type="term" value="F:voltage-gated sodium channel activity"/>
    <property type="evidence" value="ECO:0000314"/>
    <property type="project" value="UniProtKB"/>
</dbReference>
<dbReference type="GO" id="GO:0048266">
    <property type="term" value="P:behavioral response to pain"/>
    <property type="evidence" value="ECO:0007669"/>
    <property type="project" value="Ensembl"/>
</dbReference>
<dbReference type="GO" id="GO:0086002">
    <property type="term" value="P:cardiac muscle cell action potential involved in contraction"/>
    <property type="evidence" value="ECO:0000318"/>
    <property type="project" value="GO_Central"/>
</dbReference>
<dbReference type="GO" id="GO:0086010">
    <property type="term" value="P:membrane depolarization during action potential"/>
    <property type="evidence" value="ECO:0000314"/>
    <property type="project" value="UniProtKB"/>
</dbReference>
<dbReference type="GO" id="GO:0035725">
    <property type="term" value="P:sodium ion transmembrane transport"/>
    <property type="evidence" value="ECO:0000318"/>
    <property type="project" value="GO_Central"/>
</dbReference>
<dbReference type="GO" id="GO:0006814">
    <property type="term" value="P:sodium ion transport"/>
    <property type="evidence" value="ECO:0000303"/>
    <property type="project" value="UniProtKB"/>
</dbReference>
<dbReference type="CDD" id="cd13433">
    <property type="entry name" value="Na_channel_gate"/>
    <property type="match status" value="1"/>
</dbReference>
<dbReference type="FunFam" id="1.10.238.10:FF:000002">
    <property type="entry name" value="Sodium channel protein"/>
    <property type="match status" value="1"/>
</dbReference>
<dbReference type="FunFam" id="1.10.287.70:FF:000001">
    <property type="entry name" value="Sodium channel protein"/>
    <property type="match status" value="1"/>
</dbReference>
<dbReference type="FunFam" id="1.10.287.70:FF:000003">
    <property type="entry name" value="Sodium channel protein"/>
    <property type="match status" value="1"/>
</dbReference>
<dbReference type="FunFam" id="1.10.287.70:FF:000006">
    <property type="entry name" value="Sodium channel protein"/>
    <property type="match status" value="1"/>
</dbReference>
<dbReference type="FunFam" id="1.20.120.350:FF:000002">
    <property type="entry name" value="Sodium channel protein"/>
    <property type="match status" value="1"/>
</dbReference>
<dbReference type="FunFam" id="1.20.120.350:FF:000004">
    <property type="entry name" value="Sodium channel protein"/>
    <property type="match status" value="1"/>
</dbReference>
<dbReference type="FunFam" id="1.20.120.350:FF:000005">
    <property type="entry name" value="Sodium channel protein"/>
    <property type="match status" value="1"/>
</dbReference>
<dbReference type="FunFam" id="1.20.5.1190:FF:000001">
    <property type="entry name" value="Sodium channel protein"/>
    <property type="match status" value="1"/>
</dbReference>
<dbReference type="FunFam" id="1.20.120.350:FF:000003">
    <property type="entry name" value="Voltage-dependent sodium channel"/>
    <property type="match status" value="1"/>
</dbReference>
<dbReference type="Gene3D" id="1.10.287.70">
    <property type="match status" value="4"/>
</dbReference>
<dbReference type="Gene3D" id="1.10.238.10">
    <property type="entry name" value="EF-hand"/>
    <property type="match status" value="1"/>
</dbReference>
<dbReference type="Gene3D" id="1.20.5.1190">
    <property type="entry name" value="iswi atpase"/>
    <property type="match status" value="1"/>
</dbReference>
<dbReference type="Gene3D" id="1.20.120.350">
    <property type="entry name" value="Voltage-gated potassium channels. Chain C"/>
    <property type="match status" value="4"/>
</dbReference>
<dbReference type="InterPro" id="IPR005821">
    <property type="entry name" value="Ion_trans_dom"/>
</dbReference>
<dbReference type="InterPro" id="IPR001696">
    <property type="entry name" value="Na_channel_asu"/>
</dbReference>
<dbReference type="InterPro" id="IPR044564">
    <property type="entry name" value="Na_chnl_inactivation_gate"/>
</dbReference>
<dbReference type="InterPro" id="IPR010526">
    <property type="entry name" value="Na_trans_assoc_dom"/>
</dbReference>
<dbReference type="InterPro" id="IPR024583">
    <property type="entry name" value="Na_trans_cytopl"/>
</dbReference>
<dbReference type="InterPro" id="IPR043203">
    <property type="entry name" value="VGCC_Ca_Na"/>
</dbReference>
<dbReference type="InterPro" id="IPR027359">
    <property type="entry name" value="Volt_channel_dom_sf"/>
</dbReference>
<dbReference type="PANTHER" id="PTHR10037:SF237">
    <property type="entry name" value="SODIUM CHANNEL PROTEIN TYPE 3 SUBUNIT ALPHA"/>
    <property type="match status" value="1"/>
</dbReference>
<dbReference type="PANTHER" id="PTHR10037">
    <property type="entry name" value="VOLTAGE-GATED CATION CHANNEL CALCIUM AND SODIUM"/>
    <property type="match status" value="1"/>
</dbReference>
<dbReference type="Pfam" id="PF00520">
    <property type="entry name" value="Ion_trans"/>
    <property type="match status" value="4"/>
</dbReference>
<dbReference type="Pfam" id="PF24609">
    <property type="entry name" value="IQ_SCN5A_C"/>
    <property type="match status" value="1"/>
</dbReference>
<dbReference type="Pfam" id="PF06512">
    <property type="entry name" value="Na_trans_assoc"/>
    <property type="match status" value="1"/>
</dbReference>
<dbReference type="Pfam" id="PF11933">
    <property type="entry name" value="Na_trans_cytopl"/>
    <property type="match status" value="1"/>
</dbReference>
<dbReference type="PRINTS" id="PR00170">
    <property type="entry name" value="NACHANNEL"/>
</dbReference>
<dbReference type="SUPFAM" id="SSF81324">
    <property type="entry name" value="Voltage-gated potassium channels"/>
    <property type="match status" value="4"/>
</dbReference>
<dbReference type="PROSITE" id="PS50096">
    <property type="entry name" value="IQ"/>
    <property type="match status" value="1"/>
</dbReference>
<keyword id="KW-0002">3D-structure</keyword>
<keyword id="KW-0025">Alternative splicing</keyword>
<keyword id="KW-1003">Cell membrane</keyword>
<keyword id="KW-0225">Disease variant</keyword>
<keyword id="KW-1015">Disulfide bond</keyword>
<keyword id="KW-0887">Epilepsy</keyword>
<keyword id="KW-0325">Glycoprotein</keyword>
<keyword id="KW-0407">Ion channel</keyword>
<keyword id="KW-0406">Ion transport</keyword>
<keyword id="KW-0472">Membrane</keyword>
<keyword id="KW-0597">Phosphoprotein</keyword>
<keyword id="KW-1267">Proteomics identification</keyword>
<keyword id="KW-1185">Reference proteome</keyword>
<keyword id="KW-0677">Repeat</keyword>
<keyword id="KW-0915">Sodium</keyword>
<keyword id="KW-0894">Sodium channel</keyword>
<keyword id="KW-0739">Sodium transport</keyword>
<keyword id="KW-0812">Transmembrane</keyword>
<keyword id="KW-1133">Transmembrane helix</keyword>
<keyword id="KW-0813">Transport</keyword>
<keyword id="KW-0832">Ubl conjugation</keyword>
<keyword id="KW-0851">Voltage-gated channel</keyword>
<proteinExistence type="evidence at protein level"/>
<accession>Q9NY46</accession>
<accession>Q16142</accession>
<accession>Q53SX0</accession>
<accession>Q9BZB3</accession>
<accession>Q9C006</accession>
<accession>Q9NYK2</accession>
<accession>Q9P2J1</accession>
<accession>Q9UPD1</accession>
<accession>Q9Y6P4</accession>
<evidence type="ECO:0000250" key="1">
    <source>
        <dbReference type="UniProtKB" id="A2ASI5"/>
    </source>
</evidence>
<evidence type="ECO:0000250" key="2">
    <source>
        <dbReference type="UniProtKB" id="P04775"/>
    </source>
</evidence>
<evidence type="ECO:0000250" key="3">
    <source>
        <dbReference type="UniProtKB" id="P08104"/>
    </source>
</evidence>
<evidence type="ECO:0000250" key="4">
    <source>
        <dbReference type="UniProtKB" id="Q14524"/>
    </source>
</evidence>
<evidence type="ECO:0000255" key="5"/>
<evidence type="ECO:0000255" key="6">
    <source>
        <dbReference type="PROSITE-ProRule" id="PRU00116"/>
    </source>
</evidence>
<evidence type="ECO:0000256" key="7">
    <source>
        <dbReference type="SAM" id="MobiDB-lite"/>
    </source>
</evidence>
<evidence type="ECO:0000269" key="8">
    <source>
    </source>
</evidence>
<evidence type="ECO:0000269" key="9">
    <source>
    </source>
</evidence>
<evidence type="ECO:0000269" key="10">
    <source>
    </source>
</evidence>
<evidence type="ECO:0000269" key="11">
    <source>
    </source>
</evidence>
<evidence type="ECO:0000269" key="12">
    <source>
    </source>
</evidence>
<evidence type="ECO:0000269" key="13">
    <source>
    </source>
</evidence>
<evidence type="ECO:0000269" key="14">
    <source>
    </source>
</evidence>
<evidence type="ECO:0000269" key="15">
    <source>
    </source>
</evidence>
<evidence type="ECO:0000269" key="16">
    <source>
    </source>
</evidence>
<evidence type="ECO:0000269" key="17">
    <source>
    </source>
</evidence>
<evidence type="ECO:0000303" key="18">
    <source>
    </source>
</evidence>
<evidence type="ECO:0000303" key="19">
    <source>
    </source>
</evidence>
<evidence type="ECO:0000303" key="20">
    <source ref="1"/>
</evidence>
<evidence type="ECO:0000303" key="21">
    <source ref="2"/>
</evidence>
<evidence type="ECO:0000305" key="22"/>
<evidence type="ECO:0000305" key="23">
    <source>
    </source>
</evidence>
<evidence type="ECO:0000305" key="24">
    <source>
    </source>
</evidence>
<evidence type="ECO:0000305" key="25">
    <source>
    </source>
</evidence>
<evidence type="ECO:0000312" key="26">
    <source>
        <dbReference type="EMBL" id="BAA92594.1"/>
    </source>
</evidence>
<evidence type="ECO:0000312" key="27">
    <source>
        <dbReference type="HGNC" id="HGNC:10590"/>
    </source>
</evidence>
<evidence type="ECO:0007744" key="28">
    <source>
        <dbReference type="PDB" id="7W77"/>
    </source>
</evidence>
<evidence type="ECO:0007744" key="29">
    <source>
        <dbReference type="PDB" id="7W7F"/>
    </source>
</evidence>
<evidence type="ECO:0007829" key="30">
    <source>
        <dbReference type="PDB" id="7W77"/>
    </source>
</evidence>
<evidence type="ECO:0007829" key="31">
    <source>
        <dbReference type="PDB" id="7W7F"/>
    </source>
</evidence>
<protein>
    <recommendedName>
        <fullName evidence="22">Sodium channel protein type 3 subunit alpha</fullName>
    </recommendedName>
    <alternativeName>
        <fullName>Sodium channel protein brain III subunit alpha</fullName>
    </alternativeName>
    <alternativeName>
        <fullName>Sodium channel protein type III subunit alpha</fullName>
    </alternativeName>
    <alternativeName>
        <fullName>Voltage-gated sodium channel subtype III</fullName>
    </alternativeName>
    <alternativeName>
        <fullName evidence="18">Voltage-gated sodium channel subunit alpha Nav1.3</fullName>
    </alternativeName>
</protein>
<reference key="1">
    <citation type="submission" date="1999-12" db="EMBL/GenBank/DDBJ databases">
        <title>Cloning, distribution and functional analysis of the human brain type III sodium channel from human brain.</title>
        <authorList>
            <person name="Chen Y."/>
            <person name="Dale T.J."/>
            <person name="Romanos M.A."/>
            <person name="Whitaker W.R."/>
            <person name="Xie X."/>
            <person name="Clare J.J."/>
        </authorList>
    </citation>
    <scope>NUCLEOTIDE SEQUENCE [MRNA] (ISOFORM 2)</scope>
    <source>
        <tissue>Brain</tissue>
    </source>
</reference>
<reference key="2">
    <citation type="submission" date="2000-01" db="EMBL/GenBank/DDBJ databases">
        <title>Cloning of cDNA for human voltage-gated sodium channel alpha subunit, SCN3A.</title>
        <authorList>
            <person name="Jeong S.-Y."/>
            <person name="Goto J."/>
            <person name="Kanazawa I."/>
        </authorList>
    </citation>
    <scope>NUCLEOTIDE SEQUENCE [MRNA] (ISOFORM 3)</scope>
</reference>
<reference key="3">
    <citation type="journal article" date="2005" name="Am. J. Physiol.">
        <title>Molecular determinants of voltage-gated sodium channel regulation by the Nedd4/Nedd4-like proteins.</title>
        <authorList>
            <person name="Rougier J.-S."/>
            <person name="van Bemmelen M.X."/>
            <person name="Bruce M.C."/>
            <person name="Jespersen T."/>
            <person name="Gavillet B."/>
            <person name="Apotheloz F."/>
            <person name="Cordonier S."/>
            <person name="Staub O."/>
            <person name="Rotin D."/>
            <person name="Abriel H."/>
        </authorList>
    </citation>
    <scope>INTERACTION WITH NEDD4L</scope>
    <scope>POSSIBLE UBIQUITINATION</scope>
    <scope>MUTAGENESIS OF TYR-1970</scope>
</reference>
<reference key="4">
    <citation type="journal article" date="2001" name="Gene">
        <title>Genomic structures of SCN2A and SCN3A -- candidate genes for deafness at the DFNA16 locus.</title>
        <authorList>
            <person name="Kasai N."/>
            <person name="Fukushima K."/>
            <person name="Ueki Y."/>
            <person name="Prasad S."/>
            <person name="Nosakowski J."/>
            <person name="Sugata K."/>
            <person name="Sugata A."/>
            <person name="Nishizaki K."/>
            <person name="Meyer N.C."/>
            <person name="Smith R.J.H."/>
        </authorList>
    </citation>
    <scope>NUCLEOTIDE SEQUENCE [GENOMIC DNA] (ISOFORMS 1; 2; 3 AND 4)</scope>
    <scope>VARIANT THR-606</scope>
</reference>
<reference key="5">
    <citation type="journal article" date="2005" name="Nature">
        <title>Generation and annotation of the DNA sequences of human chromosomes 2 and 4.</title>
        <authorList>
            <person name="Hillier L.W."/>
            <person name="Graves T.A."/>
            <person name="Fulton R.S."/>
            <person name="Fulton L.A."/>
            <person name="Pepin K.H."/>
            <person name="Minx P."/>
            <person name="Wagner-McPherson C."/>
            <person name="Layman D."/>
            <person name="Wylie K."/>
            <person name="Sekhon M."/>
            <person name="Becker M.C."/>
            <person name="Fewell G.A."/>
            <person name="Delehaunty K.D."/>
            <person name="Miner T.L."/>
            <person name="Nash W.E."/>
            <person name="Kremitzki C."/>
            <person name="Oddy L."/>
            <person name="Du H."/>
            <person name="Sun H."/>
            <person name="Bradshaw-Cordum H."/>
            <person name="Ali J."/>
            <person name="Carter J."/>
            <person name="Cordes M."/>
            <person name="Harris A."/>
            <person name="Isak A."/>
            <person name="van Brunt A."/>
            <person name="Nguyen C."/>
            <person name="Du F."/>
            <person name="Courtney L."/>
            <person name="Kalicki J."/>
            <person name="Ozersky P."/>
            <person name="Abbott S."/>
            <person name="Armstrong J."/>
            <person name="Belter E.A."/>
            <person name="Caruso L."/>
            <person name="Cedroni M."/>
            <person name="Cotton M."/>
            <person name="Davidson T."/>
            <person name="Desai A."/>
            <person name="Elliott G."/>
            <person name="Erb T."/>
            <person name="Fronick C."/>
            <person name="Gaige T."/>
            <person name="Haakenson W."/>
            <person name="Haglund K."/>
            <person name="Holmes A."/>
            <person name="Harkins R."/>
            <person name="Kim K."/>
            <person name="Kruchowski S.S."/>
            <person name="Strong C.M."/>
            <person name="Grewal N."/>
            <person name="Goyea E."/>
            <person name="Hou S."/>
            <person name="Levy A."/>
            <person name="Martinka S."/>
            <person name="Mead K."/>
            <person name="McLellan M.D."/>
            <person name="Meyer R."/>
            <person name="Randall-Maher J."/>
            <person name="Tomlinson C."/>
            <person name="Dauphin-Kohlberg S."/>
            <person name="Kozlowicz-Reilly A."/>
            <person name="Shah N."/>
            <person name="Swearengen-Shahid S."/>
            <person name="Snider J."/>
            <person name="Strong J.T."/>
            <person name="Thompson J."/>
            <person name="Yoakum M."/>
            <person name="Leonard S."/>
            <person name="Pearman C."/>
            <person name="Trani L."/>
            <person name="Radionenko M."/>
            <person name="Waligorski J.E."/>
            <person name="Wang C."/>
            <person name="Rock S.M."/>
            <person name="Tin-Wollam A.-M."/>
            <person name="Maupin R."/>
            <person name="Latreille P."/>
            <person name="Wendl M.C."/>
            <person name="Yang S.-P."/>
            <person name="Pohl C."/>
            <person name="Wallis J.W."/>
            <person name="Spieth J."/>
            <person name="Bieri T.A."/>
            <person name="Berkowicz N."/>
            <person name="Nelson J.O."/>
            <person name="Osborne J."/>
            <person name="Ding L."/>
            <person name="Meyer R."/>
            <person name="Sabo A."/>
            <person name="Shotland Y."/>
            <person name="Sinha P."/>
            <person name="Wohldmann P.E."/>
            <person name="Cook L.L."/>
            <person name="Hickenbotham M.T."/>
            <person name="Eldred J."/>
            <person name="Williams D."/>
            <person name="Jones T.A."/>
            <person name="She X."/>
            <person name="Ciccarelli F.D."/>
            <person name="Izaurralde E."/>
            <person name="Taylor J."/>
            <person name="Schmutz J."/>
            <person name="Myers R.M."/>
            <person name="Cox D.R."/>
            <person name="Huang X."/>
            <person name="McPherson J.D."/>
            <person name="Mardis E.R."/>
            <person name="Clifton S.W."/>
            <person name="Warren W.C."/>
            <person name="Chinwalla A.T."/>
            <person name="Eddy S.R."/>
            <person name="Marra M.A."/>
            <person name="Ovcharenko I."/>
            <person name="Furey T.S."/>
            <person name="Miller W."/>
            <person name="Eichler E.E."/>
            <person name="Bork P."/>
            <person name="Suyama M."/>
            <person name="Torrents D."/>
            <person name="Waterston R.H."/>
            <person name="Wilson R.K."/>
        </authorList>
    </citation>
    <scope>NUCLEOTIDE SEQUENCE [LARGE SCALE GENOMIC DNA]</scope>
</reference>
<reference key="6">
    <citation type="journal article" date="1998" name="J. Mol. Neurosci.">
        <title>Isolation of a human-brain sodium-channel gene encoding two isoforms of the subtype III alpha-subunit.</title>
        <authorList>
            <person name="Lu C.M."/>
            <person name="Brown G.B."/>
        </authorList>
    </citation>
    <scope>NUCLEOTIDE SEQUENCE [MRNA] OF 1-1415 (ISOFORMS 2 AND 4)</scope>
    <source>
        <tissue>Brain</tissue>
    </source>
</reference>
<reference key="7">
    <citation type="journal article" date="1994" name="Proc. Natl. Acad. Sci. U.S.A.">
        <title>Targeted gene walking by low stringency polymerase chain reaction: assignment of a putative human brain sodium channel gene (SCN3A) to chromosome 2q24-31.</title>
        <authorList>
            <person name="Malo M.S."/>
            <person name="Srivastava K."/>
            <person name="Andresen J.M."/>
            <person name="Chen X.N."/>
            <person name="Korenberg J.R."/>
            <person name="Ingram V.M."/>
        </authorList>
    </citation>
    <scope>NUCLEOTIDE SEQUENCE [GENOMIC DNA] OF 1324-1413</scope>
    <source>
        <tissue>Placenta</tissue>
    </source>
</reference>
<reference key="8">
    <citation type="journal article" date="2000" name="DNA Res.">
        <title>Prediction of the coding sequences of unidentified human genes. XVI. The complete sequences of 150 new cDNA clones from brain which code for large proteins in vitro.</title>
        <authorList>
            <person name="Nagase T."/>
            <person name="Kikuno R."/>
            <person name="Ishikawa K."/>
            <person name="Hirosawa M."/>
            <person name="Ohara O."/>
        </authorList>
    </citation>
    <scope>NUCLEOTIDE SEQUENCE [LARGE SCALE MRNA] OF 1482-2000</scope>
    <source>
        <tissue>Brain</tissue>
    </source>
</reference>
<reference key="9">
    <citation type="submission" date="2000-02" db="EMBL/GenBank/DDBJ databases">
        <title>Endogenous sodium current in HEK293 cells: increase in cell surface expression of endogenous currents by stable transfection of the Beta 1 subunit.</title>
        <authorList>
            <person name="Tonkovich G.S."/>
            <person name="Kyle J.W."/>
        </authorList>
    </citation>
    <scope>NUCLEOTIDE SEQUENCE [MRNA] OF 1669-1750</scope>
    <source>
        <tissue>Kidney</tissue>
    </source>
</reference>
<reference key="10">
    <citation type="journal article" date="2014" name="Neurobiol. Dis.">
        <title>Novel SCN3A variants associated with focal epilepsy in children.</title>
        <authorList>
            <person name="Vanoye C.G."/>
            <person name="Gurnett C.A."/>
            <person name="Holland K.D."/>
            <person name="George A.L. Jr."/>
            <person name="Kearney J.A."/>
        </authorList>
    </citation>
    <scope>INVOLVEMENT IN FFEVF4</scope>
    <scope>FUNCTION</scope>
    <scope>TRANSPORTER ACTIVITY</scope>
    <scope>VARIANTS FFEVF4 GLN-357; ASN-815; LYS-1160 AND VAL-1372</scope>
</reference>
<reference key="11">
    <citation type="journal article" date="2014" name="Proc. Natl. Acad. Sci. U.S.A.">
        <title>A disulfide tether stabilizes the block of sodium channels by the conotoxin muO[section sign]-GVIIJ.</title>
        <authorList>
            <person name="Gajewiak J."/>
            <person name="Azam L."/>
            <person name="Imperial J."/>
            <person name="Walewska A."/>
            <person name="Green B.R."/>
            <person name="Bandyopadhyay P.K."/>
            <person name="Raghuraman S."/>
            <person name="Ueberheide B."/>
            <person name="Bern M."/>
            <person name="Zhou H.M."/>
            <person name="Minassian N.A."/>
            <person name="Hagan R.H."/>
            <person name="Flinspach M."/>
            <person name="Liu Y."/>
            <person name="Bulaj G."/>
            <person name="Wickenden A.D."/>
            <person name="Olivera B.M."/>
            <person name="Yoshikami D."/>
            <person name="Zhang M.M."/>
        </authorList>
    </citation>
    <scope>INTERACTION WITH THE CONOTOXIN GVIIJ</scope>
</reference>
<reference key="12">
    <citation type="journal article" date="2017" name="Neurobiol. Dis.">
        <title>SCN3A deficiency associated with increased seizure susceptibility.</title>
        <authorList>
            <person name="Lamar T."/>
            <person name="Vanoye C.G."/>
            <person name="Calhoun J."/>
            <person name="Wong J.C."/>
            <person name="Dutton S.B.B."/>
            <person name="Jorge B.S."/>
            <person name="Velinov M."/>
            <person name="Escayg A."/>
            <person name="Kearney J.A."/>
        </authorList>
    </citation>
    <scope>INVOLVEMENT IN FFEVF4</scope>
    <scope>VARIANT FFEVF4 PRO-247</scope>
    <scope>SUBCELLULAR LOCATION</scope>
    <scope>FUNCTION</scope>
    <scope>TRANSPORTER ACTIVITY</scope>
</reference>
<reference key="13">
    <citation type="journal article" date="2017" name="Sci. Rep.">
        <title>1.3 is important for enterochromaffin cell excitability and serotonin release.</title>
        <authorList>
            <person name="Strege P.R."/>
            <person name="Knutson K."/>
            <person name="Eggers S.J."/>
            <person name="Li J.H."/>
            <person name="Wang F."/>
            <person name="Linden D."/>
            <person name="Szurszewski J.H."/>
            <person name="Milescu L."/>
            <person name="Leiter A.B."/>
            <person name="Farrugia G."/>
            <person name="Beyder A."/>
        </authorList>
    </citation>
    <scope>TISSUE SPECIFICITY</scope>
</reference>
<reference evidence="28 29" key="14">
    <citation type="journal article" date="2022" name="Nat. Commun.">
        <title>Structural basis for modulation of human NaV1.3 by clinical drug and selective antagonist.</title>
        <authorList>
            <person name="Li X."/>
            <person name="Xu F."/>
            <person name="Xu H."/>
            <person name="Zhang S."/>
            <person name="Gao Y."/>
            <person name="Zhang H."/>
            <person name="Dong Y."/>
            <person name="Zheng Y."/>
            <person name="Yang B."/>
            <person name="Sun J."/>
            <person name="Zhang X.C."/>
            <person name="Zhao Y."/>
            <person name="Jiang D."/>
        </authorList>
    </citation>
    <scope>STRUCTURE BY ELECTRON MICROSCOPY (3.30 ANGSTROMS) OF 1-1951 IN COMPLEX WITH SCN1B; SCN2B AND INHIBITORS</scope>
    <scope>DISULFIDE BONDS</scope>
    <scope>FUNCTION</scope>
    <scope>TRANSPORTER ACTIVITY</scope>
    <scope>SUBUNIT</scope>
    <scope>SUBCELLULAR LOCATION</scope>
    <scope>TOPOLOGY</scope>
</reference>
<reference key="15">
    <citation type="journal article" date="2018" name="Ann. Neurol.">
        <title>Mutations in SCN3A cause early infantile epileptic encephalopathy.</title>
        <authorList>
            <person name="Zaman T."/>
            <person name="Helbig I."/>
            <person name="Bozovic I.B."/>
            <person name="DeBrosse S.D."/>
            <person name="Bergqvist A.C."/>
            <person name="Wallis K."/>
            <person name="Medne L."/>
            <person name="Maver A."/>
            <person name="Peterlin B."/>
            <person name="Helbig K.L."/>
            <person name="Zhang X."/>
            <person name="Goldberg E.M."/>
        </authorList>
    </citation>
    <scope>INVOLVEMENT IN DEE62</scope>
    <scope>VARIANTS DEE62 THR-875; LEU-1333; CYS-1642; ALA-1769 AND GLN-1799</scope>
    <scope>CHARACTERIZATION OF VARIANTS DEE62 THR-875; LEU-1333; CYS-1642; ALA-1769 AND GLN-1799</scope>
    <scope>FUNCTION</scope>
</reference>
<reference key="16">
    <citation type="journal article" date="2003" name="Mol. Psychiatry">
        <title>Sodium channels SCN1A, SCN2A and SCN3A in familial autism.</title>
        <authorList>
            <person name="Weiss L.A."/>
            <person name="Escayg A."/>
            <person name="Kearney J.A."/>
            <person name="Trudeau M."/>
            <person name="MacDonald B.T."/>
            <person name="Mori M."/>
            <person name="Reichert J."/>
            <person name="Buxbaum J.D."/>
            <person name="Meisler M.H."/>
        </authorList>
    </citation>
    <scope>VARIANTS ASN-43 DEL AND SER-1813</scope>
</reference>
<reference key="17">
    <citation type="journal article" date="2016" name="J. Med. Genet.">
        <title>Homozygous missense mutation in the LMAN2L gene segregates with intellectual disability in a large consanguineous Pakistani family.</title>
        <authorList>
            <person name="Rafiullah R."/>
            <person name="Aslamkhan M."/>
            <person name="Paramasivam N."/>
            <person name="Thiel C."/>
            <person name="Mustafa G."/>
            <person name="Wiemann S."/>
            <person name="Schlesner M."/>
            <person name="Wade R.C."/>
            <person name="Rappold G.A."/>
            <person name="Berkel S."/>
        </authorList>
    </citation>
    <scope>VARIANT ILE-1084</scope>
</reference>
<feature type="chain" id="PRO_0000048493" description="Sodium channel protein type 3 subunit alpha">
    <location>
        <begin position="1"/>
        <end position="2000"/>
    </location>
</feature>
<feature type="topological domain" description="Cytoplasmic" evidence="25">
    <location>
        <begin position="1"/>
        <end position="128"/>
    </location>
</feature>
<feature type="transmembrane region" description="Helical; Name=S1 of repeat I" evidence="25 28">
    <location>
        <begin position="129"/>
        <end position="146"/>
    </location>
</feature>
<feature type="topological domain" description="Extracellular" evidence="25">
    <location>
        <begin position="147"/>
        <end position="152"/>
    </location>
</feature>
<feature type="transmembrane region" description="Helical; Name=S2 of repeat I" evidence="25 28">
    <location>
        <begin position="153"/>
        <end position="174"/>
    </location>
</feature>
<feature type="topological domain" description="Cytoplasmic" evidence="25">
    <location>
        <begin position="175"/>
        <end position="188"/>
    </location>
</feature>
<feature type="transmembrane region" description="Helical; Name=S3 of repeat I" evidence="25 28">
    <location>
        <begin position="189"/>
        <end position="206"/>
    </location>
</feature>
<feature type="topological domain" description="Extracellular" evidence="25">
    <location>
        <begin position="207"/>
        <end position="213"/>
    </location>
</feature>
<feature type="transmembrane region" description="Helical; Name=S4 of repeat I" evidence="25 28">
    <location>
        <begin position="214"/>
        <end position="235"/>
    </location>
</feature>
<feature type="topological domain" description="Cytoplasmic" evidence="25">
    <location>
        <begin position="236"/>
        <end position="249"/>
    </location>
</feature>
<feature type="transmembrane region" description="Helical; Name=S5 of repeat I" evidence="25 28">
    <location>
        <begin position="250"/>
        <end position="269"/>
    </location>
</feature>
<feature type="topological domain" description="Extracellular" evidence="25">
    <location>
        <begin position="270"/>
        <end position="369"/>
    </location>
</feature>
<feature type="intramembrane region" description="Pore-forming" evidence="25 28">
    <location>
        <begin position="370"/>
        <end position="386"/>
    </location>
</feature>
<feature type="topological domain" description="Extracellular" evidence="25">
    <location>
        <begin position="387"/>
        <end position="397"/>
    </location>
</feature>
<feature type="transmembrane region" description="Helical; Name=S6 of repeat I" evidence="25 28">
    <location>
        <begin position="398"/>
        <end position="424"/>
    </location>
</feature>
<feature type="topological domain" description="Cytoplasmic" evidence="25">
    <location>
        <begin position="425"/>
        <end position="761"/>
    </location>
</feature>
<feature type="transmembrane region" description="Helical; Name=S1 of repeat II" evidence="25 28">
    <location>
        <begin position="762"/>
        <end position="779"/>
    </location>
</feature>
<feature type="topological domain" description="Extracellular" evidence="25">
    <location>
        <begin position="780"/>
        <end position="787"/>
    </location>
</feature>
<feature type="transmembrane region" description="Helical; Name=S2 of repeat II" evidence="25 28">
    <location>
        <begin position="788"/>
        <end position="812"/>
    </location>
</feature>
<feature type="topological domain" description="Cytoplasmic" evidence="25">
    <location>
        <begin position="813"/>
        <end position="822"/>
    </location>
</feature>
<feature type="transmembrane region" description="Helical; Name=S3 of repeat II" evidence="25 28">
    <location>
        <begin position="823"/>
        <end position="842"/>
    </location>
</feature>
<feature type="topological domain" description="Extracellular" evidence="25">
    <location>
        <begin position="843"/>
        <end position="846"/>
    </location>
</feature>
<feature type="transmembrane region" description="Helical; Name=S4 of repeat II" evidence="25 28">
    <location>
        <begin position="847"/>
        <end position="865"/>
    </location>
</feature>
<feature type="topological domain" description="Cytoplasmic" evidence="25">
    <location>
        <begin position="866"/>
        <end position="883"/>
    </location>
</feature>
<feature type="transmembrane region" description="Helical; Name=S5 of repeat II" evidence="25 28">
    <location>
        <begin position="884"/>
        <end position="904"/>
    </location>
</feature>
<feature type="topological domain" description="Extracellular" evidence="25">
    <location>
        <begin position="905"/>
        <end position="929"/>
    </location>
</feature>
<feature type="intramembrane region" description="Pore-forming" evidence="25 28">
    <location>
        <begin position="930"/>
        <end position="945"/>
    </location>
</feature>
<feature type="topological domain" description="Extracellular" evidence="25">
    <location>
        <begin position="946"/>
        <end position="956"/>
    </location>
</feature>
<feature type="transmembrane region" description="Helical; Name=S6 of repeat II" evidence="25 28">
    <location>
        <begin position="957"/>
        <end position="983"/>
    </location>
</feature>
<feature type="topological domain" description="Cytoplasmic" evidence="25">
    <location>
        <begin position="984"/>
        <end position="1205"/>
    </location>
</feature>
<feature type="transmembrane region" description="Helical; Name=S1 of repeat III" evidence="25 28">
    <location>
        <begin position="1206"/>
        <end position="1226"/>
    </location>
</feature>
<feature type="topological domain" description="Extracellular" evidence="25">
    <location>
        <begin position="1227"/>
        <end position="1238"/>
    </location>
</feature>
<feature type="transmembrane region" description="Helical; Name=S2 of repeat III" evidence="25 28">
    <location>
        <begin position="1239"/>
        <end position="1260"/>
    </location>
</feature>
<feature type="topological domain" description="Cytoplasmic" evidence="25">
    <location>
        <begin position="1261"/>
        <end position="1266"/>
    </location>
</feature>
<feature type="transmembrane region" description="Helical; Name=S3 of repeat III" evidence="25 28">
    <location>
        <begin position="1267"/>
        <end position="1292"/>
    </location>
</feature>
<feature type="topological domain" description="Extracellular" evidence="25">
    <location>
        <begin position="1293"/>
        <end position="1301"/>
    </location>
</feature>
<feature type="transmembrane region" description="Helical; Name=S4 of repeat III" evidence="25 28">
    <location>
        <begin position="1302"/>
        <end position="1320"/>
    </location>
</feature>
<feature type="topological domain" description="Cytoplasmic" evidence="25">
    <location>
        <begin position="1321"/>
        <end position="1333"/>
    </location>
</feature>
<feature type="transmembrane region" description="Helical; Name=S5 of repeat III" evidence="25 28">
    <location>
        <begin position="1334"/>
        <end position="1356"/>
    </location>
</feature>
<feature type="topological domain" description="Extracellular" evidence="25">
    <location>
        <begin position="1357"/>
        <end position="1402"/>
    </location>
</feature>
<feature type="intramembrane region" description="Pore-forming" evidence="25 28">
    <location>
        <begin position="1403"/>
        <end position="1419"/>
    </location>
</feature>
<feature type="topological domain" description="Extracellular" evidence="25">
    <location>
        <begin position="1420"/>
        <end position="1442"/>
    </location>
</feature>
<feature type="transmembrane region" description="Helical; Name=S6 of repeat III" evidence="25 28">
    <location>
        <begin position="1443"/>
        <end position="1468"/>
    </location>
</feature>
<feature type="topological domain" description="Cytoplasmic" evidence="25">
    <location>
        <begin position="1469"/>
        <end position="1526"/>
    </location>
</feature>
<feature type="transmembrane region" description="Helical; Name=S1 of repeat IV" evidence="25 28">
    <location>
        <begin position="1527"/>
        <end position="1545"/>
    </location>
</feature>
<feature type="topological domain" description="Extracellular" evidence="25">
    <location>
        <begin position="1546"/>
        <end position="1553"/>
    </location>
</feature>
<feature type="transmembrane region" description="Helical; Name=S2 of repeat IV" evidence="25 28">
    <location>
        <begin position="1554"/>
        <end position="1577"/>
    </location>
</feature>
<feature type="topological domain" description="Cytoplasmic" evidence="25">
    <location>
        <begin position="1578"/>
        <end position="1587"/>
    </location>
</feature>
<feature type="transmembrane region" description="Helical; Name=S3 of repeat IV" evidence="25 28">
    <location>
        <begin position="1588"/>
        <end position="1605"/>
    </location>
</feature>
<feature type="topological domain" description="Extracellular" evidence="25">
    <location>
        <begin position="1606"/>
        <end position="1617"/>
    </location>
</feature>
<feature type="transmembrane region" description="Helical; Name=S4 of repeat IV" evidence="25 28">
    <location>
        <begin position="1618"/>
        <end position="1640"/>
    </location>
</feature>
<feature type="topological domain" description="Cytoplasmic" evidence="25">
    <location>
        <begin position="1641"/>
        <end position="1653"/>
    </location>
</feature>
<feature type="transmembrane region" description="Helical; Name=S5 of repeat IV" evidence="25 28">
    <location>
        <begin position="1654"/>
        <end position="1677"/>
    </location>
</feature>
<feature type="topological domain" description="Extracellular" evidence="25">
    <location>
        <begin position="1678"/>
        <end position="1699"/>
    </location>
</feature>
<feature type="intramembrane region" description="Pore-forming" evidence="25 28">
    <location>
        <begin position="1700"/>
        <end position="1712"/>
    </location>
</feature>
<feature type="topological domain" description="Extracellular" evidence="25">
    <location>
        <begin position="1713"/>
        <end position="1744"/>
    </location>
</feature>
<feature type="transmembrane region" description="Helical; Name=S6 of repeat IV" evidence="25 28">
    <location>
        <begin position="1745"/>
        <end position="1770"/>
    </location>
</feature>
<feature type="topological domain" description="Cytoplasmic" evidence="25">
    <location>
        <begin position="1771"/>
        <end position="2000"/>
    </location>
</feature>
<feature type="repeat" description="I" evidence="22">
    <location>
        <begin position="110"/>
        <end position="455"/>
    </location>
</feature>
<feature type="repeat" description="II" evidence="22">
    <location>
        <begin position="742"/>
        <end position="1014"/>
    </location>
</feature>
<feature type="repeat" description="III" evidence="22">
    <location>
        <begin position="1188"/>
        <end position="1499"/>
    </location>
</feature>
<feature type="repeat" description="IV" evidence="22">
    <location>
        <begin position="1508"/>
        <end position="1806"/>
    </location>
</feature>
<feature type="domain" description="IQ" evidence="6">
    <location>
        <begin position="1900"/>
        <end position="1929"/>
    </location>
</feature>
<feature type="region of interest" description="Disordered" evidence="7">
    <location>
        <begin position="28"/>
        <end position="60"/>
    </location>
</feature>
<feature type="region of interest" description="Disordered" evidence="7">
    <location>
        <begin position="493"/>
        <end position="528"/>
    </location>
</feature>
<feature type="region of interest" description="Disordered" evidence="7">
    <location>
        <begin position="587"/>
        <end position="631"/>
    </location>
</feature>
<feature type="region of interest" description="Disordered" evidence="7">
    <location>
        <begin position="662"/>
        <end position="681"/>
    </location>
</feature>
<feature type="region of interest" description="Disordered" evidence="7">
    <location>
        <begin position="1118"/>
        <end position="1162"/>
    </location>
</feature>
<feature type="region of interest" description="Disordered" evidence="7">
    <location>
        <begin position="1949"/>
        <end position="2000"/>
    </location>
</feature>
<feature type="compositionally biased region" description="Basic and acidic residues" evidence="7">
    <location>
        <begin position="46"/>
        <end position="57"/>
    </location>
</feature>
<feature type="compositionally biased region" description="Basic residues" evidence="7">
    <location>
        <begin position="500"/>
        <end position="509"/>
    </location>
</feature>
<feature type="compositionally biased region" description="Basic and acidic residues" evidence="7">
    <location>
        <begin position="510"/>
        <end position="528"/>
    </location>
</feature>
<feature type="compositionally biased region" description="Basic and acidic residues" evidence="7">
    <location>
        <begin position="596"/>
        <end position="610"/>
    </location>
</feature>
<feature type="compositionally biased region" description="Polar residues" evidence="7">
    <location>
        <begin position="662"/>
        <end position="678"/>
    </location>
</feature>
<feature type="compositionally biased region" description="Basic and acidic residues" evidence="7">
    <location>
        <begin position="1974"/>
        <end position="2000"/>
    </location>
</feature>
<feature type="modified residue" description="Phosphoserine" evidence="3">
    <location>
        <position position="484"/>
    </location>
</feature>
<feature type="modified residue" description="Phosphoserine" evidence="3">
    <location>
        <position position="485"/>
    </location>
</feature>
<feature type="modified residue" description="Phosphoserine" evidence="3">
    <location>
        <position position="486"/>
    </location>
</feature>
<feature type="modified residue" description="Phosphoserine; by PKC" evidence="4">
    <location>
        <position position="1501"/>
    </location>
</feature>
<feature type="glycosylation site" description="N-linked (GlcNAc...) asparagine" evidence="5">
    <location>
        <position position="211"/>
    </location>
</feature>
<feature type="glycosylation site" description="N-linked (GlcNAc...) asparagine" evidence="5">
    <location>
        <position position="290"/>
    </location>
</feature>
<feature type="glycosylation site" description="N-linked (GlcNAc...) asparagine" evidence="5">
    <location>
        <position position="296"/>
    </location>
</feature>
<feature type="glycosylation site" description="N-linked (GlcNAc...) asparagine" evidence="5">
    <location>
        <position position="302"/>
    </location>
</feature>
<feature type="glycosylation site" description="N-linked (GlcNAc...) asparagine" evidence="5">
    <location>
        <position position="307"/>
    </location>
</feature>
<feature type="glycosylation site" description="N-linked (GlcNAc...) asparagine" evidence="5">
    <location>
        <position position="339"/>
    </location>
</feature>
<feature type="glycosylation site" description="N-linked (GlcNAc...) asparagine" evidence="5">
    <location>
        <position position="1366"/>
    </location>
</feature>
<feature type="glycosylation site" description="N-linked (GlcNAc...) asparagine" evidence="5">
    <location>
        <position position="1380"/>
    </location>
</feature>
<feature type="disulfide bond" description="Interchain; with SCN2B or SCN4B" evidence="25 28 29">
    <location>
        <position position="911"/>
    </location>
</feature>
<feature type="disulfide bond" description="Interchain; with the conotoxin GVIIJ (when the channel is not linked to SCN2B or SCN4B; the bond to SCN2B or SCN4B protects the channel from the inhibition by toxin)" evidence="2">
    <location>
        <position position="911"/>
    </location>
</feature>
<feature type="disulfide bond" evidence="17 28 29">
    <location>
        <begin position="913"/>
        <end position="919"/>
    </location>
</feature>
<feature type="disulfide bond" evidence="17 28 29">
    <location>
        <begin position="951"/>
        <end position="960"/>
    </location>
</feature>
<feature type="disulfide bond" evidence="17 28 29">
    <location>
        <begin position="1364"/>
        <end position="1384"/>
    </location>
</feature>
<feature type="splice variant" id="VSP_001033" description="In isoform 3 and isoform 4." evidence="19 21">
    <original>S</original>
    <variation>D</variation>
    <location>
        <position position="208"/>
    </location>
</feature>
<feature type="splice variant" id="VSP_001034" description="In isoform 2 and isoform 4." evidence="19 20">
    <location>
        <begin position="625"/>
        <end position="673"/>
    </location>
</feature>
<feature type="sequence variant" id="VAR_029743" evidence="9">
    <location>
        <position position="43"/>
    </location>
</feature>
<feature type="sequence variant" id="VAR_080503" description="In FFEVF4; loss of localization at the cell surface." evidence="14">
    <original>L</original>
    <variation>P</variation>
    <location>
        <position position="247"/>
    </location>
</feature>
<feature type="sequence variant" id="VAR_080504" description="In FFEVF4; affects voltage-dependent sodium channel activity; smaller current density and slower activation compared to wild-type channels and increased current activation in response to depolarizing voltage ramps; dbSNP:rs774195502." evidence="11">
    <original>R</original>
    <variation>Q</variation>
    <location>
        <position position="357"/>
    </location>
</feature>
<feature type="sequence variant" id="VAR_014275" evidence="8">
    <original>S</original>
    <variation>T</variation>
    <location>
        <position position="606"/>
    </location>
</feature>
<feature type="sequence variant" id="VAR_080505" description="In FFEVF4; uncertain significance; increased current activation in response to depolarizing voltage ramps; dbSNP:rs755440336." evidence="11">
    <original>D</original>
    <variation>N</variation>
    <location>
        <position position="815"/>
    </location>
</feature>
<feature type="sequence variant" id="VAR_080506" description="In DEE62; prominent gain of channel function, with markedly increased amplitude of the slowly inactivating current component and a leftward shift in the voltage dependence of activation to more hyperpolarized potentials; dbSNP:rs1057518801." evidence="16">
    <original>I</original>
    <variation>T</variation>
    <location>
        <position position="875"/>
    </location>
</feature>
<feature type="sequence variant" id="VAR_076435" description="In dbSNP:rs140990288." evidence="13">
    <original>V</original>
    <variation>I</variation>
    <location>
        <position position="1084"/>
    </location>
</feature>
<feature type="sequence variant" id="VAR_029744" description="In dbSNP:rs12474273.">
    <original>V</original>
    <variation>A</variation>
    <location>
        <position position="1107"/>
    </location>
</feature>
<feature type="sequence variant" id="VAR_080507" description="In FFEVF4; affects voltage-dependent sodium channel activity; increased level of persistent sodium current compared to wild-type channels and increased current activation in response to depolarizing voltage ramps; dbSNP:rs377632429." evidence="11">
    <original>E</original>
    <variation>K</variation>
    <location>
        <position position="1160"/>
    </location>
</feature>
<feature type="sequence variant" id="VAR_080508" description="In DEE62; prominent gain of channel function, with markedly increased amplitude of the slowly inactivating current component and a leftward shift in the voltage dependence of activation to more hyperpolarized potentials; dbSNP:rs1057520753." evidence="16">
    <original>P</original>
    <variation>L</variation>
    <location>
        <position position="1333"/>
    </location>
</feature>
<feature type="sequence variant" id="VAR_080509" description="In FFEVF4; uncertain significance; increased current activation in response to depolarizing voltage ramps; dbSNP:rs758906955." evidence="11">
    <original>M</original>
    <variation>V</variation>
    <location>
        <position position="1372"/>
    </location>
</feature>
<feature type="sequence variant" id="VAR_080510" description="In DEE62; uncertain significance; no gain of function in channel activity; channel recovery from inactivation is more rapid than that of wild-type channel; dbSNP:rs1312429782." evidence="16">
    <original>R</original>
    <variation>C</variation>
    <location>
        <position position="1642"/>
    </location>
</feature>
<feature type="sequence variant" id="VAR_080511" description="In DEE62; prominent gain of channel function, with markedly increased amplitude of the slowly inactivating current component; dbSNP:rs1553517274." evidence="16">
    <original>V</original>
    <variation>A</variation>
    <location>
        <position position="1769"/>
    </location>
</feature>
<feature type="sequence variant" id="VAR_080512" description="In DEE62; uncertain significance; no gain of function in channel activity; dbSNP:rs1170839078." evidence="16">
    <original>K</original>
    <variation>Q</variation>
    <location>
        <position position="1799"/>
    </location>
</feature>
<feature type="sequence variant" id="VAR_055640" description="In dbSNP:rs3731762.">
    <original>D</original>
    <variation>N</variation>
    <location>
        <position position="1803"/>
    </location>
</feature>
<feature type="sequence variant" id="VAR_029745" evidence="9">
    <original>L</original>
    <variation>S</variation>
    <location>
        <position position="1813"/>
    </location>
</feature>
<feature type="mutagenesis site" description="Abolishes interaction with NEDD4L." evidence="10">
    <original>Y</original>
    <variation>A</variation>
    <location>
        <position position="1970"/>
    </location>
</feature>
<feature type="sequence conflict" description="In Ref. 4; AAC29514/AAC29515." evidence="22" ref="4">
    <original>A</original>
    <variation>V</variation>
    <location>
        <position position="175"/>
    </location>
</feature>
<feature type="sequence conflict" description="In Ref. 4; AAC29514/AAC29515." evidence="22" ref="4">
    <original>Y</original>
    <variation>N</variation>
    <location>
        <position position="318"/>
    </location>
</feature>
<feature type="sequence conflict" description="In Ref. 4; AAC29514/AAC29515." evidence="22" ref="4">
    <original>M</original>
    <variation>T</variation>
    <location>
        <position position="401"/>
    </location>
</feature>
<feature type="sequence conflict" description="In Ref. 2; AAK00219." evidence="22" ref="2">
    <original>I</original>
    <variation>V</variation>
    <location>
        <position position="475"/>
    </location>
</feature>
<feature type="sequence conflict" description="In Ref. 2; AAK00219." evidence="22" ref="2">
    <original>S</original>
    <variation>G</variation>
    <location>
        <position position="495"/>
    </location>
</feature>
<feature type="sequence conflict" description="In Ref. 2; AAK00219." evidence="22" ref="2">
    <original>S</original>
    <variation>G</variation>
    <location>
        <position position="604"/>
    </location>
</feature>
<feature type="sequence conflict" description="In Ref. 4; AAC29514/AAC29515." evidence="22" ref="4">
    <original>V</original>
    <variation>E</variation>
    <location>
        <position position="613"/>
    </location>
</feature>
<feature type="sequence conflict" description="In Ref. 4; AAC29514/AAC29515." evidence="22" ref="4">
    <original>E</original>
    <variation>A</variation>
    <location>
        <position position="1060"/>
    </location>
</feature>
<feature type="sequence conflict" description="In Ref. 2; AAK00219." evidence="22" ref="2">
    <original>L</original>
    <variation>F</variation>
    <location>
        <position position="1163"/>
    </location>
</feature>
<feature type="sequence conflict" description="In Ref. 4; AAC29514/AAC29515." evidence="22" ref="4">
    <original>W</original>
    <variation>R</variation>
    <location>
        <position position="1274"/>
    </location>
</feature>
<feature type="sequence conflict" description="In Ref. 6; AAB30530." evidence="22" ref="6">
    <original>V</original>
    <variation>L</variation>
    <location>
        <position position="1329"/>
    </location>
</feature>
<feature type="sequence conflict" description="In Ref. 4; AAC29514/AAC29515." evidence="22" ref="4">
    <original>AT</original>
    <variation>VS</variation>
    <location>
        <begin position="1414"/>
        <end position="1415"/>
    </location>
</feature>
<feature type="sequence conflict" description="In Ref. 2; AAK00219." evidence="22" ref="2">
    <original>F</original>
    <variation>S</variation>
    <location>
        <position position="1614"/>
    </location>
</feature>
<feature type="sequence conflict" description="In Ref. 2; AAK00219." evidence="22" ref="2">
    <original>CGN</original>
    <variation>RGD</variation>
    <location>
        <begin position="1741"/>
        <end position="1743"/>
    </location>
</feature>
<feature type="sequence conflict" description="In Ref. 2; AAK00219." evidence="22" ref="2">
    <original>G</original>
    <variation>C</variation>
    <location>
        <position position="1862"/>
    </location>
</feature>
<feature type="sequence conflict" description="In Ref. 2; AAK00219." evidence="22" ref="2">
    <original>S</original>
    <variation>P</variation>
    <location>
        <position position="1966"/>
    </location>
</feature>
<feature type="helix" evidence="30">
    <location>
        <begin position="120"/>
        <end position="126"/>
    </location>
</feature>
<feature type="helix" evidence="30">
    <location>
        <begin position="128"/>
        <end position="145"/>
    </location>
</feature>
<feature type="helix" evidence="30">
    <location>
        <begin position="154"/>
        <end position="173"/>
    </location>
</feature>
<feature type="helix" evidence="30">
    <location>
        <begin position="189"/>
        <end position="203"/>
    </location>
</feature>
<feature type="helix" evidence="30">
    <location>
        <begin position="215"/>
        <end position="222"/>
    </location>
</feature>
<feature type="helix" evidence="30">
    <location>
        <begin position="223"/>
        <end position="228"/>
    </location>
</feature>
<feature type="helix" evidence="30">
    <location>
        <begin position="233"/>
        <end position="243"/>
    </location>
</feature>
<feature type="helix" evidence="30">
    <location>
        <begin position="244"/>
        <end position="247"/>
    </location>
</feature>
<feature type="helix" evidence="30">
    <location>
        <begin position="248"/>
        <end position="268"/>
    </location>
</feature>
<feature type="strand" evidence="31">
    <location>
        <begin position="269"/>
        <end position="271"/>
    </location>
</feature>
<feature type="helix" evidence="30">
    <location>
        <begin position="272"/>
        <end position="274"/>
    </location>
</feature>
<feature type="strand" evidence="30">
    <location>
        <begin position="275"/>
        <end position="279"/>
    </location>
</feature>
<feature type="turn" evidence="30">
    <location>
        <begin position="314"/>
        <end position="318"/>
    </location>
</feature>
<feature type="helix" evidence="30">
    <location>
        <begin position="319"/>
        <end position="321"/>
    </location>
</feature>
<feature type="strand" evidence="30">
    <location>
        <begin position="322"/>
        <end position="325"/>
    </location>
</feature>
<feature type="turn" evidence="31">
    <location>
        <begin position="329"/>
        <end position="331"/>
    </location>
</feature>
<feature type="strand" evidence="30">
    <location>
        <begin position="332"/>
        <end position="334"/>
    </location>
</feature>
<feature type="strand" evidence="31">
    <location>
        <begin position="339"/>
        <end position="343"/>
    </location>
</feature>
<feature type="strand" evidence="30">
    <location>
        <begin position="350"/>
        <end position="354"/>
    </location>
</feature>
<feature type="turn" evidence="30">
    <location>
        <begin position="361"/>
        <end position="363"/>
    </location>
</feature>
<feature type="strand" evidence="30">
    <location>
        <begin position="366"/>
        <end position="368"/>
    </location>
</feature>
<feature type="helix" evidence="30">
    <location>
        <begin position="369"/>
        <end position="381"/>
    </location>
</feature>
<feature type="turn" evidence="31">
    <location>
        <begin position="382"/>
        <end position="384"/>
    </location>
</feature>
<feature type="helix" evidence="30">
    <location>
        <begin position="385"/>
        <end position="395"/>
    </location>
</feature>
<feature type="helix" evidence="30">
    <location>
        <begin position="398"/>
        <end position="400"/>
    </location>
</feature>
<feature type="helix" evidence="30">
    <location>
        <begin position="401"/>
        <end position="410"/>
    </location>
</feature>
<feature type="turn" evidence="30">
    <location>
        <begin position="411"/>
        <end position="413"/>
    </location>
</feature>
<feature type="helix" evidence="30">
    <location>
        <begin position="414"/>
        <end position="437"/>
    </location>
</feature>
<feature type="helix" evidence="30">
    <location>
        <begin position="742"/>
        <end position="754"/>
    </location>
</feature>
<feature type="strand" evidence="30">
    <location>
        <begin position="758"/>
        <end position="763"/>
    </location>
</feature>
<feature type="helix" evidence="30">
    <location>
        <begin position="764"/>
        <end position="778"/>
    </location>
</feature>
<feature type="turn" evidence="30">
    <location>
        <begin position="786"/>
        <end position="788"/>
    </location>
</feature>
<feature type="helix" evidence="30">
    <location>
        <begin position="789"/>
        <end position="814"/>
    </location>
</feature>
<feature type="turn" evidence="31">
    <location>
        <begin position="816"/>
        <end position="818"/>
    </location>
</feature>
<feature type="helix" evidence="30">
    <location>
        <begin position="824"/>
        <end position="841"/>
    </location>
</feature>
<feature type="helix" evidence="30">
    <location>
        <begin position="849"/>
        <end position="863"/>
    </location>
</feature>
<feature type="helix" evidence="30">
    <location>
        <begin position="866"/>
        <end position="879"/>
    </location>
</feature>
<feature type="turn" evidence="30">
    <location>
        <begin position="880"/>
        <end position="882"/>
    </location>
</feature>
<feature type="helix" evidence="30">
    <location>
        <begin position="883"/>
        <end position="910"/>
    </location>
</feature>
<feature type="helix" evidence="30">
    <location>
        <begin position="912"/>
        <end position="914"/>
    </location>
</feature>
<feature type="strand" evidence="30">
    <location>
        <begin position="917"/>
        <end position="920"/>
    </location>
</feature>
<feature type="strand" evidence="30">
    <location>
        <begin position="926"/>
        <end position="928"/>
    </location>
</feature>
<feature type="helix" evidence="30">
    <location>
        <begin position="929"/>
        <end position="941"/>
    </location>
</feature>
<feature type="helix" evidence="30">
    <location>
        <begin position="945"/>
        <end position="955"/>
    </location>
</feature>
<feature type="helix" evidence="30">
    <location>
        <begin position="957"/>
        <end position="984"/>
    </location>
</feature>
<feature type="helix" evidence="30">
    <location>
        <begin position="1192"/>
        <end position="1204"/>
    </location>
</feature>
<feature type="helix" evidence="30">
    <location>
        <begin position="1206"/>
        <end position="1221"/>
    </location>
</feature>
<feature type="turn" evidence="30">
    <location>
        <begin position="1222"/>
        <end position="1225"/>
    </location>
</feature>
<feature type="helix" evidence="30">
    <location>
        <begin position="1230"/>
        <end position="1233"/>
    </location>
</feature>
<feature type="helix" evidence="30">
    <location>
        <begin position="1236"/>
        <end position="1262"/>
    </location>
</feature>
<feature type="helix" evidence="30">
    <location>
        <begin position="1264"/>
        <end position="1268"/>
    </location>
</feature>
<feature type="helix" evidence="30">
    <location>
        <begin position="1271"/>
        <end position="1292"/>
    </location>
</feature>
<feature type="turn" evidence="30">
    <location>
        <begin position="1293"/>
        <end position="1295"/>
    </location>
</feature>
<feature type="helix" evidence="30">
    <location>
        <begin position="1298"/>
        <end position="1304"/>
    </location>
</feature>
<feature type="helix" evidence="30">
    <location>
        <begin position="1305"/>
        <end position="1313"/>
    </location>
</feature>
<feature type="helix" evidence="30">
    <location>
        <begin position="1314"/>
        <end position="1317"/>
    </location>
</feature>
<feature type="helix" evidence="30">
    <location>
        <begin position="1319"/>
        <end position="1356"/>
    </location>
</feature>
<feature type="turn" evidence="30">
    <location>
        <begin position="1367"/>
        <end position="1369"/>
    </location>
</feature>
<feature type="turn" evidence="30">
    <location>
        <begin position="1375"/>
        <end position="1377"/>
    </location>
</feature>
<feature type="helix" evidence="30">
    <location>
        <begin position="1383"/>
        <end position="1385"/>
    </location>
</feature>
<feature type="strand" evidence="30">
    <location>
        <begin position="1389"/>
        <end position="1391"/>
    </location>
</feature>
<feature type="strand" evidence="30">
    <location>
        <begin position="1397"/>
        <end position="1399"/>
    </location>
</feature>
<feature type="helix" evidence="30">
    <location>
        <begin position="1403"/>
        <end position="1415"/>
    </location>
</feature>
<feature type="strand" evidence="31">
    <location>
        <begin position="1416"/>
        <end position="1418"/>
    </location>
</feature>
<feature type="helix" evidence="30">
    <location>
        <begin position="1419"/>
        <end position="1428"/>
    </location>
</feature>
<feature type="turn" evidence="30">
    <location>
        <begin position="1438"/>
        <end position="1441"/>
    </location>
</feature>
<feature type="helix" evidence="30">
    <location>
        <begin position="1442"/>
        <end position="1444"/>
    </location>
</feature>
<feature type="helix" evidence="30">
    <location>
        <begin position="1445"/>
        <end position="1453"/>
    </location>
</feature>
<feature type="turn" evidence="30">
    <location>
        <begin position="1454"/>
        <end position="1457"/>
    </location>
</feature>
<feature type="helix" evidence="30">
    <location>
        <begin position="1458"/>
        <end position="1478"/>
    </location>
</feature>
<feature type="helix" evidence="30">
    <location>
        <begin position="1487"/>
        <end position="1500"/>
    </location>
</feature>
<feature type="strand" evidence="30">
    <location>
        <begin position="1512"/>
        <end position="1514"/>
    </location>
</feature>
<feature type="helix" evidence="30">
    <location>
        <begin position="1516"/>
        <end position="1523"/>
    </location>
</feature>
<feature type="helix" evidence="30">
    <location>
        <begin position="1526"/>
        <end position="1544"/>
    </location>
</feature>
<feature type="helix" evidence="30">
    <location>
        <begin position="1552"/>
        <end position="1580"/>
    </location>
</feature>
<feature type="helix" evidence="30">
    <location>
        <begin position="1588"/>
        <end position="1612"/>
    </location>
</feature>
<feature type="helix" evidence="30">
    <location>
        <begin position="1617"/>
        <end position="1623"/>
    </location>
</feature>
<feature type="helix" evidence="30">
    <location>
        <begin position="1626"/>
        <end position="1632"/>
    </location>
</feature>
<feature type="helix" evidence="30">
    <location>
        <begin position="1633"/>
        <end position="1636"/>
    </location>
</feature>
<feature type="helix" evidence="30">
    <location>
        <begin position="1641"/>
        <end position="1676"/>
    </location>
</feature>
<feature type="helix" evidence="30">
    <location>
        <begin position="1677"/>
        <end position="1679"/>
    </location>
</feature>
<feature type="strand" evidence="30">
    <location>
        <begin position="1688"/>
        <end position="1694"/>
    </location>
</feature>
<feature type="helix" evidence="30">
    <location>
        <begin position="1695"/>
        <end position="1706"/>
    </location>
</feature>
<feature type="turn" evidence="30">
    <location>
        <begin position="1707"/>
        <end position="1710"/>
    </location>
</feature>
<feature type="helix" evidence="30">
    <location>
        <begin position="1711"/>
        <end position="1715"/>
    </location>
</feature>
<feature type="turn" evidence="30">
    <location>
        <begin position="1716"/>
        <end position="1718"/>
    </location>
</feature>
<feature type="turn" evidence="31">
    <location>
        <begin position="1723"/>
        <end position="1725"/>
    </location>
</feature>
<feature type="helix" evidence="30">
    <location>
        <begin position="1744"/>
        <end position="1777"/>
    </location>
</feature>
<name>SCN3A_HUMAN</name>